<proteinExistence type="inferred from homology"/>
<gene>
    <name evidence="1" type="primary">purT</name>
    <name type="ordered locus">ELI_09480</name>
</gene>
<name>PURT_ERYLH</name>
<dbReference type="EC" id="6.3.1.21" evidence="1"/>
<dbReference type="EMBL" id="CP000157">
    <property type="protein sequence ID" value="ABC63988.1"/>
    <property type="molecule type" value="Genomic_DNA"/>
</dbReference>
<dbReference type="RefSeq" id="WP_011414816.1">
    <property type="nucleotide sequence ID" value="NC_007722.1"/>
</dbReference>
<dbReference type="SMR" id="Q2N8K3"/>
<dbReference type="STRING" id="314225.ELI_09480"/>
<dbReference type="KEGG" id="eli:ELI_09480"/>
<dbReference type="eggNOG" id="COG0027">
    <property type="taxonomic scope" value="Bacteria"/>
</dbReference>
<dbReference type="HOGENOM" id="CLU_011534_1_3_5"/>
<dbReference type="OrthoDB" id="9804625at2"/>
<dbReference type="UniPathway" id="UPA00074">
    <property type="reaction ID" value="UER00127"/>
</dbReference>
<dbReference type="Proteomes" id="UP000008808">
    <property type="component" value="Chromosome"/>
</dbReference>
<dbReference type="GO" id="GO:0005829">
    <property type="term" value="C:cytosol"/>
    <property type="evidence" value="ECO:0007669"/>
    <property type="project" value="TreeGrafter"/>
</dbReference>
<dbReference type="GO" id="GO:0005524">
    <property type="term" value="F:ATP binding"/>
    <property type="evidence" value="ECO:0007669"/>
    <property type="project" value="UniProtKB-UniRule"/>
</dbReference>
<dbReference type="GO" id="GO:0000287">
    <property type="term" value="F:magnesium ion binding"/>
    <property type="evidence" value="ECO:0007669"/>
    <property type="project" value="InterPro"/>
</dbReference>
<dbReference type="GO" id="GO:0043815">
    <property type="term" value="F:phosphoribosylglycinamide formyltransferase 2 activity"/>
    <property type="evidence" value="ECO:0007669"/>
    <property type="project" value="UniProtKB-UniRule"/>
</dbReference>
<dbReference type="GO" id="GO:0004644">
    <property type="term" value="F:phosphoribosylglycinamide formyltransferase activity"/>
    <property type="evidence" value="ECO:0007669"/>
    <property type="project" value="InterPro"/>
</dbReference>
<dbReference type="GO" id="GO:0006189">
    <property type="term" value="P:'de novo' IMP biosynthetic process"/>
    <property type="evidence" value="ECO:0007669"/>
    <property type="project" value="UniProtKB-UniRule"/>
</dbReference>
<dbReference type="FunFam" id="3.40.50.20:FF:000022">
    <property type="entry name" value="Formate-dependent phosphoribosylglycinamide formyltransferase"/>
    <property type="match status" value="1"/>
</dbReference>
<dbReference type="Gene3D" id="3.40.50.20">
    <property type="match status" value="1"/>
</dbReference>
<dbReference type="Gene3D" id="3.30.1490.20">
    <property type="entry name" value="ATP-grasp fold, A domain"/>
    <property type="match status" value="1"/>
</dbReference>
<dbReference type="Gene3D" id="3.30.470.20">
    <property type="entry name" value="ATP-grasp fold, B domain"/>
    <property type="match status" value="1"/>
</dbReference>
<dbReference type="HAMAP" id="MF_01643">
    <property type="entry name" value="PurT"/>
    <property type="match status" value="1"/>
</dbReference>
<dbReference type="InterPro" id="IPR011761">
    <property type="entry name" value="ATP-grasp"/>
</dbReference>
<dbReference type="InterPro" id="IPR003135">
    <property type="entry name" value="ATP-grasp_carboxylate-amine"/>
</dbReference>
<dbReference type="InterPro" id="IPR013815">
    <property type="entry name" value="ATP_grasp_subdomain_1"/>
</dbReference>
<dbReference type="InterPro" id="IPR016185">
    <property type="entry name" value="PreATP-grasp_dom_sf"/>
</dbReference>
<dbReference type="InterPro" id="IPR005862">
    <property type="entry name" value="PurT"/>
</dbReference>
<dbReference type="InterPro" id="IPR054350">
    <property type="entry name" value="PurT/PurK_preATP-grasp"/>
</dbReference>
<dbReference type="InterPro" id="IPR048740">
    <property type="entry name" value="PurT_C"/>
</dbReference>
<dbReference type="InterPro" id="IPR011054">
    <property type="entry name" value="Rudment_hybrid_motif"/>
</dbReference>
<dbReference type="NCBIfam" id="NF006766">
    <property type="entry name" value="PRK09288.1"/>
    <property type="match status" value="1"/>
</dbReference>
<dbReference type="NCBIfam" id="TIGR01142">
    <property type="entry name" value="purT"/>
    <property type="match status" value="1"/>
</dbReference>
<dbReference type="PANTHER" id="PTHR43055">
    <property type="entry name" value="FORMATE-DEPENDENT PHOSPHORIBOSYLGLYCINAMIDE FORMYLTRANSFERASE"/>
    <property type="match status" value="1"/>
</dbReference>
<dbReference type="PANTHER" id="PTHR43055:SF1">
    <property type="entry name" value="FORMATE-DEPENDENT PHOSPHORIBOSYLGLYCINAMIDE FORMYLTRANSFERASE"/>
    <property type="match status" value="1"/>
</dbReference>
<dbReference type="Pfam" id="PF02222">
    <property type="entry name" value="ATP-grasp"/>
    <property type="match status" value="1"/>
</dbReference>
<dbReference type="Pfam" id="PF21244">
    <property type="entry name" value="PurT_C"/>
    <property type="match status" value="1"/>
</dbReference>
<dbReference type="Pfam" id="PF22660">
    <property type="entry name" value="RS_preATP-grasp-like"/>
    <property type="match status" value="1"/>
</dbReference>
<dbReference type="SUPFAM" id="SSF56059">
    <property type="entry name" value="Glutathione synthetase ATP-binding domain-like"/>
    <property type="match status" value="1"/>
</dbReference>
<dbReference type="SUPFAM" id="SSF52440">
    <property type="entry name" value="PreATP-grasp domain"/>
    <property type="match status" value="1"/>
</dbReference>
<dbReference type="SUPFAM" id="SSF51246">
    <property type="entry name" value="Rudiment single hybrid motif"/>
    <property type="match status" value="1"/>
</dbReference>
<dbReference type="PROSITE" id="PS50975">
    <property type="entry name" value="ATP_GRASP"/>
    <property type="match status" value="1"/>
</dbReference>
<keyword id="KW-0067">ATP-binding</keyword>
<keyword id="KW-0436">Ligase</keyword>
<keyword id="KW-0460">Magnesium</keyword>
<keyword id="KW-0479">Metal-binding</keyword>
<keyword id="KW-0547">Nucleotide-binding</keyword>
<keyword id="KW-0658">Purine biosynthesis</keyword>
<keyword id="KW-1185">Reference proteome</keyword>
<organism>
    <name type="scientific">Erythrobacter litoralis (strain HTCC2594)</name>
    <dbReference type="NCBI Taxonomy" id="314225"/>
    <lineage>
        <taxon>Bacteria</taxon>
        <taxon>Pseudomonadati</taxon>
        <taxon>Pseudomonadota</taxon>
        <taxon>Alphaproteobacteria</taxon>
        <taxon>Sphingomonadales</taxon>
        <taxon>Erythrobacteraceae</taxon>
        <taxon>Erythrobacter/Porphyrobacter group</taxon>
        <taxon>Erythrobacter</taxon>
    </lineage>
</organism>
<sequence>MPHTAKILLLGSGELGREFVISAKRLGAYVVACDAYAAAPAMQVADASEVLSMLDADALRAVVAKHHPDYVVPEIEAIRTEVLAEIEADGFNVVPSAYATQMTMNRDAIRDLAAQELGITTSRYRYAKNLEEVRAAAEFTGYPCVIKPVMSSSGKGQSTVRSADKLEEAWDYAVANMRGDRKRVIVEQFIDFDYEITLLTVRHKDGITFCPPIGHRQERGDYRESWQPATMSKPAIAAAQEMAEKVVTALQGNGKGFGLFGVEFFVKGEEVIFSELSPRPHDTGMVTSVSQNLSEFDLHARAIMGLHVPSEILARPSASAVILAEQESETVSYSGLAAAMEGGADIRIFGKPNTRPYRRMGVALATGGDTDYARTAAVAAANKLHIHYGD</sequence>
<comment type="function">
    <text evidence="1">Involved in the de novo purine biosynthesis. Catalyzes the transfer of formate to 5-phospho-ribosyl-glycinamide (GAR), producing 5-phospho-ribosyl-N-formylglycinamide (FGAR). Formate is provided by PurU via hydrolysis of 10-formyl-tetrahydrofolate.</text>
</comment>
<comment type="catalytic activity">
    <reaction evidence="1">
        <text>N(1)-(5-phospho-beta-D-ribosyl)glycinamide + formate + ATP = N(2)-formyl-N(1)-(5-phospho-beta-D-ribosyl)glycinamide + ADP + phosphate + H(+)</text>
        <dbReference type="Rhea" id="RHEA:24829"/>
        <dbReference type="ChEBI" id="CHEBI:15378"/>
        <dbReference type="ChEBI" id="CHEBI:15740"/>
        <dbReference type="ChEBI" id="CHEBI:30616"/>
        <dbReference type="ChEBI" id="CHEBI:43474"/>
        <dbReference type="ChEBI" id="CHEBI:143788"/>
        <dbReference type="ChEBI" id="CHEBI:147286"/>
        <dbReference type="ChEBI" id="CHEBI:456216"/>
        <dbReference type="EC" id="6.3.1.21"/>
    </reaction>
    <physiologicalReaction direction="left-to-right" evidence="1">
        <dbReference type="Rhea" id="RHEA:24830"/>
    </physiologicalReaction>
</comment>
<comment type="pathway">
    <text evidence="1">Purine metabolism; IMP biosynthesis via de novo pathway; N(2)-formyl-N(1)-(5-phospho-D-ribosyl)glycinamide from N(1)-(5-phospho-D-ribosyl)glycinamide (formate route): step 1/1.</text>
</comment>
<comment type="subunit">
    <text evidence="1">Homodimer.</text>
</comment>
<comment type="similarity">
    <text evidence="1">Belongs to the PurK/PurT family.</text>
</comment>
<feature type="chain" id="PRO_0000319161" description="Formate-dependent phosphoribosylglycinamide formyltransferase">
    <location>
        <begin position="1"/>
        <end position="390"/>
    </location>
</feature>
<feature type="domain" description="ATP-grasp" evidence="1">
    <location>
        <begin position="111"/>
        <end position="304"/>
    </location>
</feature>
<feature type="binding site" evidence="1">
    <location>
        <begin position="14"/>
        <end position="15"/>
    </location>
    <ligand>
        <name>N(1)-(5-phospho-beta-D-ribosyl)glycinamide</name>
        <dbReference type="ChEBI" id="CHEBI:143788"/>
    </ligand>
</feature>
<feature type="binding site" evidence="1">
    <location>
        <position position="74"/>
    </location>
    <ligand>
        <name>N(1)-(5-phospho-beta-D-ribosyl)glycinamide</name>
        <dbReference type="ChEBI" id="CHEBI:143788"/>
    </ligand>
</feature>
<feature type="binding site" evidence="1">
    <location>
        <position position="106"/>
    </location>
    <ligand>
        <name>ATP</name>
        <dbReference type="ChEBI" id="CHEBI:30616"/>
    </ligand>
</feature>
<feature type="binding site" evidence="1">
    <location>
        <position position="147"/>
    </location>
    <ligand>
        <name>ATP</name>
        <dbReference type="ChEBI" id="CHEBI:30616"/>
    </ligand>
</feature>
<feature type="binding site" evidence="1">
    <location>
        <begin position="152"/>
        <end position="157"/>
    </location>
    <ligand>
        <name>ATP</name>
        <dbReference type="ChEBI" id="CHEBI:30616"/>
    </ligand>
</feature>
<feature type="binding site" evidence="1">
    <location>
        <begin position="187"/>
        <end position="190"/>
    </location>
    <ligand>
        <name>ATP</name>
        <dbReference type="ChEBI" id="CHEBI:30616"/>
    </ligand>
</feature>
<feature type="binding site" evidence="1">
    <location>
        <position position="195"/>
    </location>
    <ligand>
        <name>ATP</name>
        <dbReference type="ChEBI" id="CHEBI:30616"/>
    </ligand>
</feature>
<feature type="binding site" evidence="1">
    <location>
        <position position="263"/>
    </location>
    <ligand>
        <name>Mg(2+)</name>
        <dbReference type="ChEBI" id="CHEBI:18420"/>
    </ligand>
</feature>
<feature type="binding site" evidence="1">
    <location>
        <position position="275"/>
    </location>
    <ligand>
        <name>Mg(2+)</name>
        <dbReference type="ChEBI" id="CHEBI:18420"/>
    </ligand>
</feature>
<feature type="binding site" evidence="1">
    <location>
        <position position="282"/>
    </location>
    <ligand>
        <name>N(1)-(5-phospho-beta-D-ribosyl)glycinamide</name>
        <dbReference type="ChEBI" id="CHEBI:143788"/>
    </ligand>
</feature>
<feature type="binding site" evidence="1">
    <location>
        <position position="351"/>
    </location>
    <ligand>
        <name>N(1)-(5-phospho-beta-D-ribosyl)glycinamide</name>
        <dbReference type="ChEBI" id="CHEBI:143788"/>
    </ligand>
</feature>
<feature type="binding site" evidence="1">
    <location>
        <begin position="358"/>
        <end position="359"/>
    </location>
    <ligand>
        <name>N(1)-(5-phospho-beta-D-ribosyl)glycinamide</name>
        <dbReference type="ChEBI" id="CHEBI:143788"/>
    </ligand>
</feature>
<accession>Q2N8K3</accession>
<protein>
    <recommendedName>
        <fullName evidence="1">Formate-dependent phosphoribosylglycinamide formyltransferase</fullName>
        <ecNumber evidence="1">6.3.1.21</ecNumber>
    </recommendedName>
    <alternativeName>
        <fullName evidence="1">5'-phosphoribosylglycinamide transformylase 2</fullName>
    </alternativeName>
    <alternativeName>
        <fullName evidence="1">Formate-dependent GAR transformylase</fullName>
    </alternativeName>
    <alternativeName>
        <fullName evidence="1">GAR transformylase 2</fullName>
        <shortName evidence="1">GART 2</shortName>
    </alternativeName>
    <alternativeName>
        <fullName evidence="1">Non-folate glycinamide ribonucleotide transformylase</fullName>
    </alternativeName>
    <alternativeName>
        <fullName evidence="1">Phosphoribosylglycinamide formyltransferase 2</fullName>
    </alternativeName>
</protein>
<reference key="1">
    <citation type="journal article" date="2009" name="J. Bacteriol.">
        <title>Complete genome sequence of Erythrobacter litoralis HTCC2594.</title>
        <authorList>
            <person name="Oh H.M."/>
            <person name="Giovannoni S.J."/>
            <person name="Ferriera S."/>
            <person name="Johnson J."/>
            <person name="Cho J.C."/>
        </authorList>
    </citation>
    <scope>NUCLEOTIDE SEQUENCE [LARGE SCALE GENOMIC DNA]</scope>
    <source>
        <strain>HTCC2594</strain>
    </source>
</reference>
<evidence type="ECO:0000255" key="1">
    <source>
        <dbReference type="HAMAP-Rule" id="MF_01643"/>
    </source>
</evidence>